<sequence>MAELVFHTGPMDSGKSTLALQMDHAQSAHDRQGVRYAMHDRSGGARITSRIGLSVEAVEVTDSLDLYQDIVSRLSRGGRIDYLICDEAQFYRTKQIDQLARVVDDLDIDVYCFGILADFRTELFPGSKRLVELADRVVEPPVSPLCWCGRPATHNARIVDGKLVREGDQVGVGDIGGGSEIHYEVLCRRHHRQGITGEISRATLSEQTLPFDGSRS</sequence>
<proteinExistence type="inferred from homology"/>
<gene>
    <name evidence="1" type="primary">tdk</name>
    <name type="ordered locus">PPA1049</name>
</gene>
<keyword id="KW-0067">ATP-binding</keyword>
<keyword id="KW-0963">Cytoplasm</keyword>
<keyword id="KW-0237">DNA synthesis</keyword>
<keyword id="KW-0418">Kinase</keyword>
<keyword id="KW-0547">Nucleotide-binding</keyword>
<keyword id="KW-0808">Transferase</keyword>
<comment type="catalytic activity">
    <reaction evidence="1">
        <text>thymidine + ATP = dTMP + ADP + H(+)</text>
        <dbReference type="Rhea" id="RHEA:19129"/>
        <dbReference type="ChEBI" id="CHEBI:15378"/>
        <dbReference type="ChEBI" id="CHEBI:17748"/>
        <dbReference type="ChEBI" id="CHEBI:30616"/>
        <dbReference type="ChEBI" id="CHEBI:63528"/>
        <dbReference type="ChEBI" id="CHEBI:456216"/>
        <dbReference type="EC" id="2.7.1.21"/>
    </reaction>
</comment>
<comment type="subunit">
    <text evidence="1">Homotetramer.</text>
</comment>
<comment type="subcellular location">
    <subcellularLocation>
        <location evidence="1">Cytoplasm</location>
    </subcellularLocation>
</comment>
<comment type="similarity">
    <text evidence="1">Belongs to the thymidine kinase family.</text>
</comment>
<name>KITH_CUTAK</name>
<accession>Q6A8W6</accession>
<feature type="chain" id="PRO_0000175006" description="Thymidine kinase">
    <location>
        <begin position="1"/>
        <end position="216"/>
    </location>
</feature>
<feature type="active site" description="Proton acceptor" evidence="1">
    <location>
        <position position="87"/>
    </location>
</feature>
<feature type="binding site" evidence="1">
    <location>
        <begin position="9"/>
        <end position="16"/>
    </location>
    <ligand>
        <name>ATP</name>
        <dbReference type="ChEBI" id="CHEBI:30616"/>
    </ligand>
</feature>
<feature type="binding site" evidence="1">
    <location>
        <begin position="86"/>
        <end position="89"/>
    </location>
    <ligand>
        <name>ATP</name>
        <dbReference type="ChEBI" id="CHEBI:30616"/>
    </ligand>
</feature>
<evidence type="ECO:0000255" key="1">
    <source>
        <dbReference type="HAMAP-Rule" id="MF_00124"/>
    </source>
</evidence>
<dbReference type="EC" id="2.7.1.21" evidence="1"/>
<dbReference type="EMBL" id="AE017283">
    <property type="protein sequence ID" value="AAT82800.1"/>
    <property type="molecule type" value="Genomic_DNA"/>
</dbReference>
<dbReference type="SMR" id="Q6A8W6"/>
<dbReference type="EnsemblBacteria" id="AAT82800">
    <property type="protein sequence ID" value="AAT82800"/>
    <property type="gene ID" value="PPA1049"/>
</dbReference>
<dbReference type="KEGG" id="pac:PPA1049"/>
<dbReference type="eggNOG" id="COG1435">
    <property type="taxonomic scope" value="Bacteria"/>
</dbReference>
<dbReference type="HOGENOM" id="CLU_064400_2_0_11"/>
<dbReference type="Proteomes" id="UP000000603">
    <property type="component" value="Chromosome"/>
</dbReference>
<dbReference type="GO" id="GO:0005829">
    <property type="term" value="C:cytosol"/>
    <property type="evidence" value="ECO:0007669"/>
    <property type="project" value="TreeGrafter"/>
</dbReference>
<dbReference type="GO" id="GO:0005524">
    <property type="term" value="F:ATP binding"/>
    <property type="evidence" value="ECO:0007669"/>
    <property type="project" value="UniProtKB-UniRule"/>
</dbReference>
<dbReference type="GO" id="GO:0004797">
    <property type="term" value="F:thymidine kinase activity"/>
    <property type="evidence" value="ECO:0007669"/>
    <property type="project" value="UniProtKB-UniRule"/>
</dbReference>
<dbReference type="GO" id="GO:0071897">
    <property type="term" value="P:DNA biosynthetic process"/>
    <property type="evidence" value="ECO:0007669"/>
    <property type="project" value="UniProtKB-KW"/>
</dbReference>
<dbReference type="GO" id="GO:0046104">
    <property type="term" value="P:thymidine metabolic process"/>
    <property type="evidence" value="ECO:0007669"/>
    <property type="project" value="TreeGrafter"/>
</dbReference>
<dbReference type="Gene3D" id="3.30.60.20">
    <property type="match status" value="1"/>
</dbReference>
<dbReference type="Gene3D" id="3.40.50.300">
    <property type="entry name" value="P-loop containing nucleotide triphosphate hydrolases"/>
    <property type="match status" value="1"/>
</dbReference>
<dbReference type="HAMAP" id="MF_00124">
    <property type="entry name" value="Thymidine_kinase"/>
    <property type="match status" value="1"/>
</dbReference>
<dbReference type="InterPro" id="IPR027417">
    <property type="entry name" value="P-loop_NTPase"/>
</dbReference>
<dbReference type="InterPro" id="IPR001267">
    <property type="entry name" value="Thymidine_kinase"/>
</dbReference>
<dbReference type="NCBIfam" id="NF003297">
    <property type="entry name" value="PRK04296.1-2"/>
    <property type="match status" value="1"/>
</dbReference>
<dbReference type="PANTHER" id="PTHR11441">
    <property type="entry name" value="THYMIDINE KINASE"/>
    <property type="match status" value="1"/>
</dbReference>
<dbReference type="PANTHER" id="PTHR11441:SF0">
    <property type="entry name" value="THYMIDINE KINASE, CYTOSOLIC"/>
    <property type="match status" value="1"/>
</dbReference>
<dbReference type="Pfam" id="PF00265">
    <property type="entry name" value="TK"/>
    <property type="match status" value="1"/>
</dbReference>
<dbReference type="PIRSF" id="PIRSF035805">
    <property type="entry name" value="TK_cell"/>
    <property type="match status" value="1"/>
</dbReference>
<dbReference type="SUPFAM" id="SSF57716">
    <property type="entry name" value="Glucocorticoid receptor-like (DNA-binding domain)"/>
    <property type="match status" value="1"/>
</dbReference>
<dbReference type="SUPFAM" id="SSF52540">
    <property type="entry name" value="P-loop containing nucleoside triphosphate hydrolases"/>
    <property type="match status" value="1"/>
</dbReference>
<reference key="1">
    <citation type="journal article" date="2004" name="Science">
        <title>The complete genome sequence of Propionibacterium acnes, a commensal of human skin.</title>
        <authorList>
            <person name="Brueggemann H."/>
            <person name="Henne A."/>
            <person name="Hoster F."/>
            <person name="Liesegang H."/>
            <person name="Wiezer A."/>
            <person name="Strittmatter A."/>
            <person name="Hujer S."/>
            <person name="Duerre P."/>
            <person name="Gottschalk G."/>
        </authorList>
    </citation>
    <scope>NUCLEOTIDE SEQUENCE [LARGE SCALE GENOMIC DNA]</scope>
    <source>
        <strain>DSM 16379 / KPA171202</strain>
    </source>
</reference>
<protein>
    <recommendedName>
        <fullName evidence="1">Thymidine kinase</fullName>
        <ecNumber evidence="1">2.7.1.21</ecNumber>
    </recommendedName>
</protein>
<organism>
    <name type="scientific">Cutibacterium acnes (strain DSM 16379 / KPA171202)</name>
    <name type="common">Propionibacterium acnes</name>
    <dbReference type="NCBI Taxonomy" id="267747"/>
    <lineage>
        <taxon>Bacteria</taxon>
        <taxon>Bacillati</taxon>
        <taxon>Actinomycetota</taxon>
        <taxon>Actinomycetes</taxon>
        <taxon>Propionibacteriales</taxon>
        <taxon>Propionibacteriaceae</taxon>
        <taxon>Cutibacterium</taxon>
    </lineage>
</organism>